<accession>Q1I3Q8</accession>
<organism>
    <name type="scientific">Pseudomonas entomophila (strain L48)</name>
    <dbReference type="NCBI Taxonomy" id="384676"/>
    <lineage>
        <taxon>Bacteria</taxon>
        <taxon>Pseudomonadati</taxon>
        <taxon>Pseudomonadota</taxon>
        <taxon>Gammaproteobacteria</taxon>
        <taxon>Pseudomonadales</taxon>
        <taxon>Pseudomonadaceae</taxon>
        <taxon>Pseudomonas</taxon>
    </lineage>
</organism>
<name>HUTU_PSEE4</name>
<keyword id="KW-0963">Cytoplasm</keyword>
<keyword id="KW-0369">Histidine metabolism</keyword>
<keyword id="KW-0456">Lyase</keyword>
<keyword id="KW-0520">NAD</keyword>
<reference key="1">
    <citation type="journal article" date="2006" name="Nat. Biotechnol.">
        <title>Complete genome sequence of the entomopathogenic and metabolically versatile soil bacterium Pseudomonas entomophila.</title>
        <authorList>
            <person name="Vodovar N."/>
            <person name="Vallenet D."/>
            <person name="Cruveiller S."/>
            <person name="Rouy Z."/>
            <person name="Barbe V."/>
            <person name="Acosta C."/>
            <person name="Cattolico L."/>
            <person name="Jubin C."/>
            <person name="Lajus A."/>
            <person name="Segurens B."/>
            <person name="Vacherie B."/>
            <person name="Wincker P."/>
            <person name="Weissenbach J."/>
            <person name="Lemaitre B."/>
            <person name="Medigue C."/>
            <person name="Boccard F."/>
        </authorList>
    </citation>
    <scope>NUCLEOTIDE SEQUENCE [LARGE SCALE GENOMIC DNA]</scope>
    <source>
        <strain>L48</strain>
    </source>
</reference>
<protein>
    <recommendedName>
        <fullName evidence="1">Urocanate hydratase</fullName>
        <shortName evidence="1">Urocanase</shortName>
        <ecNumber evidence="1">4.2.1.49</ecNumber>
    </recommendedName>
    <alternativeName>
        <fullName evidence="1">Imidazolonepropionate hydrolase</fullName>
    </alternativeName>
</protein>
<gene>
    <name evidence="1" type="primary">hutU</name>
    <name type="ordered locus">PSEEN5097</name>
</gene>
<feature type="chain" id="PRO_1000025141" description="Urocanate hydratase">
    <location>
        <begin position="1"/>
        <end position="557"/>
    </location>
</feature>
<feature type="active site" evidence="1">
    <location>
        <position position="411"/>
    </location>
</feature>
<feature type="binding site" evidence="1">
    <location>
        <begin position="53"/>
        <end position="54"/>
    </location>
    <ligand>
        <name>NAD(+)</name>
        <dbReference type="ChEBI" id="CHEBI:57540"/>
    </ligand>
</feature>
<feature type="binding site" evidence="1">
    <location>
        <position position="131"/>
    </location>
    <ligand>
        <name>NAD(+)</name>
        <dbReference type="ChEBI" id="CHEBI:57540"/>
    </ligand>
</feature>
<feature type="binding site" evidence="1">
    <location>
        <begin position="177"/>
        <end position="179"/>
    </location>
    <ligand>
        <name>NAD(+)</name>
        <dbReference type="ChEBI" id="CHEBI:57540"/>
    </ligand>
</feature>
<feature type="binding site" evidence="1">
    <location>
        <position position="197"/>
    </location>
    <ligand>
        <name>NAD(+)</name>
        <dbReference type="ChEBI" id="CHEBI:57540"/>
    </ligand>
</feature>
<feature type="binding site" evidence="1">
    <location>
        <position position="202"/>
    </location>
    <ligand>
        <name>NAD(+)</name>
        <dbReference type="ChEBI" id="CHEBI:57540"/>
    </ligand>
</feature>
<feature type="binding site" evidence="1">
    <location>
        <begin position="243"/>
        <end position="244"/>
    </location>
    <ligand>
        <name>NAD(+)</name>
        <dbReference type="ChEBI" id="CHEBI:57540"/>
    </ligand>
</feature>
<feature type="binding site" evidence="1">
    <location>
        <begin position="264"/>
        <end position="268"/>
    </location>
    <ligand>
        <name>NAD(+)</name>
        <dbReference type="ChEBI" id="CHEBI:57540"/>
    </ligand>
</feature>
<feature type="binding site" evidence="1">
    <location>
        <begin position="274"/>
        <end position="275"/>
    </location>
    <ligand>
        <name>NAD(+)</name>
        <dbReference type="ChEBI" id="CHEBI:57540"/>
    </ligand>
</feature>
<feature type="binding site" evidence="1">
    <location>
        <position position="323"/>
    </location>
    <ligand>
        <name>NAD(+)</name>
        <dbReference type="ChEBI" id="CHEBI:57540"/>
    </ligand>
</feature>
<feature type="binding site" evidence="1">
    <location>
        <position position="493"/>
    </location>
    <ligand>
        <name>NAD(+)</name>
        <dbReference type="ChEBI" id="CHEBI:57540"/>
    </ligand>
</feature>
<proteinExistence type="inferred from homology"/>
<sequence>MTDNNKYRDVEIRAPRGNKLTAKSWLTEAPLRMLMNNLDPQVAENPKELVVYGGIGRAARNWECYDKIVETLTRLEDDETLLVQSGKPVGVFKTHSNAPRVLIANSNLVPHWANWEHFNELDAKGLAMYGQMTAGSWIYIGSQGIVQGTYETFVEAGRQHYNGSLKGKWVLTAGLGGMGGAQPLAATLAGACSLNIECQQSRIDFRLETRYVDEQATDLDDALARIAKYTAEGKAISIALHGNAAEILPELVKRGVRPDMVTDQTSAHDPLNGYLPAGWTWEQYRDRAQTDPAAVVKAAKQSMAVHVKAMLDFQKQGIPTFDYGNNIRQMAKEEGVANAFDFPGFVPAYIRPLFCRGVGPFRWAALSGDAEDIYKTDAKVKELIPDDAHLHRWLDMARERISFQGLPARICWVGLGLRAKLGLAFNEMVRSGELSAPVVIGRDHLDSGSVSSPNRETEAMRDGSDAVSDWPLLNALLNTAGGATWVSLHHGGGVGMGFSQHSGMVIVCDGTDEAAERIARVLTNDPGTGVMRHADAGYQIAIDCAKEQGLDLPMITG</sequence>
<comment type="function">
    <text evidence="1">Catalyzes the conversion of urocanate to 4-imidazolone-5-propionate.</text>
</comment>
<comment type="catalytic activity">
    <reaction evidence="1">
        <text>4-imidazolone-5-propanoate = trans-urocanate + H2O</text>
        <dbReference type="Rhea" id="RHEA:13101"/>
        <dbReference type="ChEBI" id="CHEBI:15377"/>
        <dbReference type="ChEBI" id="CHEBI:17771"/>
        <dbReference type="ChEBI" id="CHEBI:77893"/>
        <dbReference type="EC" id="4.2.1.49"/>
    </reaction>
</comment>
<comment type="cofactor">
    <cofactor evidence="1">
        <name>NAD(+)</name>
        <dbReference type="ChEBI" id="CHEBI:57540"/>
    </cofactor>
    <text evidence="1">Binds 1 NAD(+) per subunit.</text>
</comment>
<comment type="pathway">
    <text evidence="1">Amino-acid degradation; L-histidine degradation into L-glutamate; N-formimidoyl-L-glutamate from L-histidine: step 2/3.</text>
</comment>
<comment type="subcellular location">
    <subcellularLocation>
        <location evidence="1">Cytoplasm</location>
    </subcellularLocation>
</comment>
<comment type="similarity">
    <text evidence="1">Belongs to the urocanase family.</text>
</comment>
<evidence type="ECO:0000255" key="1">
    <source>
        <dbReference type="HAMAP-Rule" id="MF_00577"/>
    </source>
</evidence>
<dbReference type="EC" id="4.2.1.49" evidence="1"/>
<dbReference type="EMBL" id="CT573326">
    <property type="protein sequence ID" value="CAK17728.1"/>
    <property type="molecule type" value="Genomic_DNA"/>
</dbReference>
<dbReference type="RefSeq" id="WP_011536088.1">
    <property type="nucleotide sequence ID" value="NC_008027.1"/>
</dbReference>
<dbReference type="SMR" id="Q1I3Q8"/>
<dbReference type="STRING" id="384676.PSEEN5097"/>
<dbReference type="GeneID" id="32808033"/>
<dbReference type="KEGG" id="pen:PSEEN5097"/>
<dbReference type="eggNOG" id="COG2987">
    <property type="taxonomic scope" value="Bacteria"/>
</dbReference>
<dbReference type="HOGENOM" id="CLU_018868_0_1_6"/>
<dbReference type="OrthoDB" id="9764874at2"/>
<dbReference type="UniPathway" id="UPA00379">
    <property type="reaction ID" value="UER00550"/>
</dbReference>
<dbReference type="Proteomes" id="UP000000658">
    <property type="component" value="Chromosome"/>
</dbReference>
<dbReference type="GO" id="GO:0005737">
    <property type="term" value="C:cytoplasm"/>
    <property type="evidence" value="ECO:0007669"/>
    <property type="project" value="UniProtKB-SubCell"/>
</dbReference>
<dbReference type="GO" id="GO:0016153">
    <property type="term" value="F:urocanate hydratase activity"/>
    <property type="evidence" value="ECO:0007669"/>
    <property type="project" value="UniProtKB-UniRule"/>
</dbReference>
<dbReference type="GO" id="GO:0019556">
    <property type="term" value="P:L-histidine catabolic process to glutamate and formamide"/>
    <property type="evidence" value="ECO:0007669"/>
    <property type="project" value="UniProtKB-UniPathway"/>
</dbReference>
<dbReference type="GO" id="GO:0019557">
    <property type="term" value="P:L-histidine catabolic process to glutamate and formate"/>
    <property type="evidence" value="ECO:0007669"/>
    <property type="project" value="UniProtKB-UniPathway"/>
</dbReference>
<dbReference type="FunFam" id="3.40.50.10730:FF:000001">
    <property type="entry name" value="Urocanate hydratase"/>
    <property type="match status" value="1"/>
</dbReference>
<dbReference type="Gene3D" id="3.40.50.10730">
    <property type="entry name" value="Urocanase like domains"/>
    <property type="match status" value="1"/>
</dbReference>
<dbReference type="Gene3D" id="3.40.1770.10">
    <property type="entry name" value="Urocanase superfamily"/>
    <property type="match status" value="1"/>
</dbReference>
<dbReference type="HAMAP" id="MF_00577">
    <property type="entry name" value="HutU"/>
    <property type="match status" value="1"/>
</dbReference>
<dbReference type="InterPro" id="IPR055351">
    <property type="entry name" value="Urocanase"/>
</dbReference>
<dbReference type="InterPro" id="IPR023637">
    <property type="entry name" value="Urocanase-like"/>
</dbReference>
<dbReference type="InterPro" id="IPR035401">
    <property type="entry name" value="Urocanase_C"/>
</dbReference>
<dbReference type="InterPro" id="IPR038364">
    <property type="entry name" value="Urocanase_central_sf"/>
</dbReference>
<dbReference type="InterPro" id="IPR023636">
    <property type="entry name" value="Urocanase_CS"/>
</dbReference>
<dbReference type="InterPro" id="IPR035400">
    <property type="entry name" value="Urocanase_N"/>
</dbReference>
<dbReference type="InterPro" id="IPR035085">
    <property type="entry name" value="Urocanase_Rossmann-like"/>
</dbReference>
<dbReference type="InterPro" id="IPR036190">
    <property type="entry name" value="Urocanase_sf"/>
</dbReference>
<dbReference type="NCBIfam" id="TIGR01228">
    <property type="entry name" value="hutU"/>
    <property type="match status" value="1"/>
</dbReference>
<dbReference type="NCBIfam" id="NF003820">
    <property type="entry name" value="PRK05414.1"/>
    <property type="match status" value="1"/>
</dbReference>
<dbReference type="PANTHER" id="PTHR12216">
    <property type="entry name" value="UROCANATE HYDRATASE"/>
    <property type="match status" value="1"/>
</dbReference>
<dbReference type="PANTHER" id="PTHR12216:SF4">
    <property type="entry name" value="UROCANATE HYDRATASE"/>
    <property type="match status" value="1"/>
</dbReference>
<dbReference type="Pfam" id="PF01175">
    <property type="entry name" value="Urocanase"/>
    <property type="match status" value="1"/>
</dbReference>
<dbReference type="Pfam" id="PF17392">
    <property type="entry name" value="Urocanase_C"/>
    <property type="match status" value="1"/>
</dbReference>
<dbReference type="Pfam" id="PF17391">
    <property type="entry name" value="Urocanase_N"/>
    <property type="match status" value="1"/>
</dbReference>
<dbReference type="PIRSF" id="PIRSF001423">
    <property type="entry name" value="Urocanate_hydrat"/>
    <property type="match status" value="1"/>
</dbReference>
<dbReference type="SUPFAM" id="SSF111326">
    <property type="entry name" value="Urocanase"/>
    <property type="match status" value="1"/>
</dbReference>
<dbReference type="PROSITE" id="PS01233">
    <property type="entry name" value="UROCANASE"/>
    <property type="match status" value="1"/>
</dbReference>